<keyword id="KW-0687">Ribonucleoprotein</keyword>
<keyword id="KW-0689">Ribosomal protein</keyword>
<name>RL19_BORBZ</name>
<sequence length="121" mass="13993">MDLIRKIEAQNKKNEAFVFNVGDTVRVVYKIIEGSNERLQSFEGIVISFQNKGIGKTFLIRKISSGIGVEKIFPVYSPIIEKVEVLRRGKVRRAKLYYMRNRIGKAAIKIKERLTIKKVKH</sequence>
<protein>
    <recommendedName>
        <fullName evidence="1">Large ribosomal subunit protein bL19</fullName>
    </recommendedName>
    <alternativeName>
        <fullName evidence="2">50S ribosomal protein L19</fullName>
    </alternativeName>
</protein>
<proteinExistence type="inferred from homology"/>
<accession>B7J0E6</accession>
<organism>
    <name type="scientific">Borreliella burgdorferi (strain ZS7)</name>
    <name type="common">Borrelia burgdorferi</name>
    <dbReference type="NCBI Taxonomy" id="445985"/>
    <lineage>
        <taxon>Bacteria</taxon>
        <taxon>Pseudomonadati</taxon>
        <taxon>Spirochaetota</taxon>
        <taxon>Spirochaetia</taxon>
        <taxon>Spirochaetales</taxon>
        <taxon>Borreliaceae</taxon>
        <taxon>Borreliella</taxon>
    </lineage>
</organism>
<comment type="function">
    <text evidence="1">This protein is located at the 30S-50S ribosomal subunit interface and may play a role in the structure and function of the aminoacyl-tRNA binding site.</text>
</comment>
<comment type="similarity">
    <text evidence="1">Belongs to the bacterial ribosomal protein bL19 family.</text>
</comment>
<gene>
    <name evidence="1" type="primary">rplS</name>
    <name type="ordered locus">BbuZS7_0720</name>
</gene>
<reference key="1">
    <citation type="journal article" date="2011" name="J. Bacteriol.">
        <title>Whole-genome sequences of thirteen isolates of Borrelia burgdorferi.</title>
        <authorList>
            <person name="Schutzer S.E."/>
            <person name="Fraser-Liggett C.M."/>
            <person name="Casjens S.R."/>
            <person name="Qiu W.G."/>
            <person name="Dunn J.J."/>
            <person name="Mongodin E.F."/>
            <person name="Luft B.J."/>
        </authorList>
    </citation>
    <scope>NUCLEOTIDE SEQUENCE [LARGE SCALE GENOMIC DNA]</scope>
    <source>
        <strain>ZS7</strain>
    </source>
</reference>
<dbReference type="EMBL" id="CP001205">
    <property type="protein sequence ID" value="ACK74988.1"/>
    <property type="molecule type" value="Genomic_DNA"/>
</dbReference>
<dbReference type="RefSeq" id="WP_012597391.1">
    <property type="nucleotide sequence ID" value="NC_011728.1"/>
</dbReference>
<dbReference type="SMR" id="B7J0E6"/>
<dbReference type="KEGG" id="bbz:BbuZS7_0720"/>
<dbReference type="HOGENOM" id="CLU_103507_2_2_12"/>
<dbReference type="Proteomes" id="UP000006901">
    <property type="component" value="Chromosome"/>
</dbReference>
<dbReference type="GO" id="GO:0022625">
    <property type="term" value="C:cytosolic large ribosomal subunit"/>
    <property type="evidence" value="ECO:0007669"/>
    <property type="project" value="TreeGrafter"/>
</dbReference>
<dbReference type="GO" id="GO:0003735">
    <property type="term" value="F:structural constituent of ribosome"/>
    <property type="evidence" value="ECO:0007669"/>
    <property type="project" value="InterPro"/>
</dbReference>
<dbReference type="GO" id="GO:0006412">
    <property type="term" value="P:translation"/>
    <property type="evidence" value="ECO:0007669"/>
    <property type="project" value="UniProtKB-UniRule"/>
</dbReference>
<dbReference type="Gene3D" id="2.30.30.790">
    <property type="match status" value="1"/>
</dbReference>
<dbReference type="HAMAP" id="MF_00402">
    <property type="entry name" value="Ribosomal_bL19"/>
    <property type="match status" value="1"/>
</dbReference>
<dbReference type="InterPro" id="IPR001857">
    <property type="entry name" value="Ribosomal_bL19"/>
</dbReference>
<dbReference type="InterPro" id="IPR018257">
    <property type="entry name" value="Ribosomal_bL19_CS"/>
</dbReference>
<dbReference type="InterPro" id="IPR038657">
    <property type="entry name" value="Ribosomal_bL19_sf"/>
</dbReference>
<dbReference type="InterPro" id="IPR008991">
    <property type="entry name" value="Translation_prot_SH3-like_sf"/>
</dbReference>
<dbReference type="NCBIfam" id="TIGR01024">
    <property type="entry name" value="rplS_bact"/>
    <property type="match status" value="1"/>
</dbReference>
<dbReference type="PANTHER" id="PTHR15680:SF9">
    <property type="entry name" value="LARGE RIBOSOMAL SUBUNIT PROTEIN BL19M"/>
    <property type="match status" value="1"/>
</dbReference>
<dbReference type="PANTHER" id="PTHR15680">
    <property type="entry name" value="RIBOSOMAL PROTEIN L19"/>
    <property type="match status" value="1"/>
</dbReference>
<dbReference type="Pfam" id="PF01245">
    <property type="entry name" value="Ribosomal_L19"/>
    <property type="match status" value="1"/>
</dbReference>
<dbReference type="PIRSF" id="PIRSF002191">
    <property type="entry name" value="Ribosomal_L19"/>
    <property type="match status" value="1"/>
</dbReference>
<dbReference type="PRINTS" id="PR00061">
    <property type="entry name" value="RIBOSOMALL19"/>
</dbReference>
<dbReference type="SUPFAM" id="SSF50104">
    <property type="entry name" value="Translation proteins SH3-like domain"/>
    <property type="match status" value="1"/>
</dbReference>
<dbReference type="PROSITE" id="PS01015">
    <property type="entry name" value="RIBOSOMAL_L19"/>
    <property type="match status" value="1"/>
</dbReference>
<evidence type="ECO:0000255" key="1">
    <source>
        <dbReference type="HAMAP-Rule" id="MF_00402"/>
    </source>
</evidence>
<evidence type="ECO:0000305" key="2"/>
<feature type="chain" id="PRO_1000193796" description="Large ribosomal subunit protein bL19">
    <location>
        <begin position="1"/>
        <end position="121"/>
    </location>
</feature>